<dbReference type="EC" id="2.7.1.148" evidence="1"/>
<dbReference type="EMBL" id="AP006627">
    <property type="protein sequence ID" value="BAD62617.1"/>
    <property type="molecule type" value="Genomic_DNA"/>
</dbReference>
<dbReference type="RefSeq" id="WP_011244938.1">
    <property type="nucleotide sequence ID" value="NC_006582.1"/>
</dbReference>
<dbReference type="SMR" id="Q5WLV8"/>
<dbReference type="STRING" id="66692.ABC0074"/>
<dbReference type="KEGG" id="bcl:ABC0074"/>
<dbReference type="eggNOG" id="COG1947">
    <property type="taxonomic scope" value="Bacteria"/>
</dbReference>
<dbReference type="HOGENOM" id="CLU_053057_1_1_9"/>
<dbReference type="OrthoDB" id="9809438at2"/>
<dbReference type="UniPathway" id="UPA00056">
    <property type="reaction ID" value="UER00094"/>
</dbReference>
<dbReference type="Proteomes" id="UP000001168">
    <property type="component" value="Chromosome"/>
</dbReference>
<dbReference type="GO" id="GO:0050515">
    <property type="term" value="F:4-(cytidine 5'-diphospho)-2-C-methyl-D-erythritol kinase activity"/>
    <property type="evidence" value="ECO:0007669"/>
    <property type="project" value="UniProtKB-UniRule"/>
</dbReference>
<dbReference type="GO" id="GO:0005524">
    <property type="term" value="F:ATP binding"/>
    <property type="evidence" value="ECO:0007669"/>
    <property type="project" value="UniProtKB-UniRule"/>
</dbReference>
<dbReference type="GO" id="GO:0019288">
    <property type="term" value="P:isopentenyl diphosphate biosynthetic process, methylerythritol 4-phosphate pathway"/>
    <property type="evidence" value="ECO:0007669"/>
    <property type="project" value="UniProtKB-UniRule"/>
</dbReference>
<dbReference type="GO" id="GO:0016114">
    <property type="term" value="P:terpenoid biosynthetic process"/>
    <property type="evidence" value="ECO:0007669"/>
    <property type="project" value="InterPro"/>
</dbReference>
<dbReference type="FunFam" id="3.30.230.10:FF:000029">
    <property type="entry name" value="4-diphosphocytidyl-2-C-methyl-D-erythritol kinase"/>
    <property type="match status" value="1"/>
</dbReference>
<dbReference type="FunFam" id="3.30.70.890:FF:000006">
    <property type="entry name" value="4-diphosphocytidyl-2-C-methyl-D-erythritol kinase"/>
    <property type="match status" value="1"/>
</dbReference>
<dbReference type="Gene3D" id="3.30.230.10">
    <property type="match status" value="1"/>
</dbReference>
<dbReference type="Gene3D" id="3.30.70.890">
    <property type="entry name" value="GHMP kinase, C-terminal domain"/>
    <property type="match status" value="1"/>
</dbReference>
<dbReference type="HAMAP" id="MF_00061">
    <property type="entry name" value="IspE"/>
    <property type="match status" value="1"/>
</dbReference>
<dbReference type="InterPro" id="IPR013750">
    <property type="entry name" value="GHMP_kinase_C_dom"/>
</dbReference>
<dbReference type="InterPro" id="IPR036554">
    <property type="entry name" value="GHMP_kinase_C_sf"/>
</dbReference>
<dbReference type="InterPro" id="IPR006204">
    <property type="entry name" value="GHMP_kinase_N_dom"/>
</dbReference>
<dbReference type="InterPro" id="IPR004424">
    <property type="entry name" value="IspE"/>
</dbReference>
<dbReference type="InterPro" id="IPR020568">
    <property type="entry name" value="Ribosomal_Su5_D2-typ_SF"/>
</dbReference>
<dbReference type="InterPro" id="IPR014721">
    <property type="entry name" value="Ribsml_uS5_D2-typ_fold_subgr"/>
</dbReference>
<dbReference type="NCBIfam" id="TIGR00154">
    <property type="entry name" value="ispE"/>
    <property type="match status" value="1"/>
</dbReference>
<dbReference type="PANTHER" id="PTHR43527">
    <property type="entry name" value="4-DIPHOSPHOCYTIDYL-2-C-METHYL-D-ERYTHRITOL KINASE, CHLOROPLASTIC"/>
    <property type="match status" value="1"/>
</dbReference>
<dbReference type="PANTHER" id="PTHR43527:SF2">
    <property type="entry name" value="4-DIPHOSPHOCYTIDYL-2-C-METHYL-D-ERYTHRITOL KINASE, CHLOROPLASTIC"/>
    <property type="match status" value="1"/>
</dbReference>
<dbReference type="Pfam" id="PF08544">
    <property type="entry name" value="GHMP_kinases_C"/>
    <property type="match status" value="1"/>
</dbReference>
<dbReference type="Pfam" id="PF00288">
    <property type="entry name" value="GHMP_kinases_N"/>
    <property type="match status" value="1"/>
</dbReference>
<dbReference type="PIRSF" id="PIRSF010376">
    <property type="entry name" value="IspE"/>
    <property type="match status" value="1"/>
</dbReference>
<dbReference type="SUPFAM" id="SSF55060">
    <property type="entry name" value="GHMP Kinase, C-terminal domain"/>
    <property type="match status" value="1"/>
</dbReference>
<dbReference type="SUPFAM" id="SSF54211">
    <property type="entry name" value="Ribosomal protein S5 domain 2-like"/>
    <property type="match status" value="1"/>
</dbReference>
<accession>Q5WLV8</accession>
<protein>
    <recommendedName>
        <fullName evidence="1">4-diphosphocytidyl-2-C-methyl-D-erythritol kinase</fullName>
        <shortName evidence="1">CMK</shortName>
        <ecNumber evidence="1">2.7.1.148</ecNumber>
    </recommendedName>
    <alternativeName>
        <fullName evidence="1">4-(cytidine-5'-diphospho)-2-C-methyl-D-erythritol kinase</fullName>
    </alternativeName>
</protein>
<feature type="chain" id="PRO_0000235063" description="4-diphosphocytidyl-2-C-methyl-D-erythritol kinase">
    <location>
        <begin position="1"/>
        <end position="297"/>
    </location>
</feature>
<feature type="active site" evidence="1">
    <location>
        <position position="10"/>
    </location>
</feature>
<feature type="active site" evidence="1">
    <location>
        <position position="136"/>
    </location>
</feature>
<feature type="binding site" evidence="1">
    <location>
        <begin position="94"/>
        <end position="104"/>
    </location>
    <ligand>
        <name>ATP</name>
        <dbReference type="ChEBI" id="CHEBI:30616"/>
    </ligand>
</feature>
<name>ISPE_SHOC1</name>
<reference key="1">
    <citation type="submission" date="2003-10" db="EMBL/GenBank/DDBJ databases">
        <title>The complete genome sequence of the alkaliphilic Bacillus clausii KSM-K16.</title>
        <authorList>
            <person name="Takaki Y."/>
            <person name="Kageyama Y."/>
            <person name="Shimamura S."/>
            <person name="Suzuki H."/>
            <person name="Nishi S."/>
            <person name="Hatada Y."/>
            <person name="Kawai S."/>
            <person name="Ito S."/>
            <person name="Horikoshi K."/>
        </authorList>
    </citation>
    <scope>NUCLEOTIDE SEQUENCE [LARGE SCALE GENOMIC DNA]</scope>
    <source>
        <strain>KSM-K16</strain>
    </source>
</reference>
<comment type="function">
    <text evidence="1">Catalyzes the phosphorylation of the position 2 hydroxy group of 4-diphosphocytidyl-2C-methyl-D-erythritol.</text>
</comment>
<comment type="catalytic activity">
    <reaction evidence="1">
        <text>4-CDP-2-C-methyl-D-erythritol + ATP = 4-CDP-2-C-methyl-D-erythritol 2-phosphate + ADP + H(+)</text>
        <dbReference type="Rhea" id="RHEA:18437"/>
        <dbReference type="ChEBI" id="CHEBI:15378"/>
        <dbReference type="ChEBI" id="CHEBI:30616"/>
        <dbReference type="ChEBI" id="CHEBI:57823"/>
        <dbReference type="ChEBI" id="CHEBI:57919"/>
        <dbReference type="ChEBI" id="CHEBI:456216"/>
        <dbReference type="EC" id="2.7.1.148"/>
    </reaction>
</comment>
<comment type="pathway">
    <text evidence="1">Isoprenoid biosynthesis; isopentenyl diphosphate biosynthesis via DXP pathway; isopentenyl diphosphate from 1-deoxy-D-xylulose 5-phosphate: step 3/6.</text>
</comment>
<comment type="similarity">
    <text evidence="1">Belongs to the GHMP kinase family. IspE subfamily.</text>
</comment>
<organism>
    <name type="scientific">Shouchella clausii (strain KSM-K16)</name>
    <name type="common">Alkalihalobacillus clausii</name>
    <dbReference type="NCBI Taxonomy" id="66692"/>
    <lineage>
        <taxon>Bacteria</taxon>
        <taxon>Bacillati</taxon>
        <taxon>Bacillota</taxon>
        <taxon>Bacilli</taxon>
        <taxon>Bacillales</taxon>
        <taxon>Bacillaceae</taxon>
        <taxon>Shouchella</taxon>
    </lineage>
</organism>
<proteinExistence type="inferred from homology"/>
<keyword id="KW-0067">ATP-binding</keyword>
<keyword id="KW-0414">Isoprene biosynthesis</keyword>
<keyword id="KW-0418">Kinase</keyword>
<keyword id="KW-0547">Nucleotide-binding</keyword>
<keyword id="KW-1185">Reference proteome</keyword>
<keyword id="KW-0808">Transferase</keyword>
<gene>
    <name evidence="1" type="primary">ispE</name>
    <name type="ordered locus">ABC0074</name>
</gene>
<sequence>MKYSIKAPAKINLSLDVIRKREDGYHEVEMIMTMVDLADRVDLSLRADGGISIDVSEGFVPSDERNFAYQAASLLKKRYNVREGVHIYITKRIPVAAGLAGGSSDAAATLKGLNELWQLGLSVDELATLGAEIGSDVSFCVYGGTALATGRGELIKPIASPPPLWVILAKPPIGLSTADVYNGLKLSEARHAKTAEMIAALERQDAASICALLHNTLEDVTLRLYPEVAHIKEQMKRFGANGVLMSGSGPTVFGIVEKESRVNRIYNGLRGFCDEVYAVRLIRTSGTCPNTDENGML</sequence>
<evidence type="ECO:0000255" key="1">
    <source>
        <dbReference type="HAMAP-Rule" id="MF_00061"/>
    </source>
</evidence>